<accession>Q89I98</accession>
<reference key="1">
    <citation type="journal article" date="2002" name="DNA Res.">
        <title>Complete genomic sequence of nitrogen-fixing symbiotic bacterium Bradyrhizobium japonicum USDA110.</title>
        <authorList>
            <person name="Kaneko T."/>
            <person name="Nakamura Y."/>
            <person name="Sato S."/>
            <person name="Minamisawa K."/>
            <person name="Uchiumi T."/>
            <person name="Sasamoto S."/>
            <person name="Watanabe A."/>
            <person name="Idesawa K."/>
            <person name="Iriguchi M."/>
            <person name="Kawashima K."/>
            <person name="Kohara M."/>
            <person name="Matsumoto M."/>
            <person name="Shimpo S."/>
            <person name="Tsuruoka H."/>
            <person name="Wada T."/>
            <person name="Yamada M."/>
            <person name="Tabata S."/>
        </authorList>
    </citation>
    <scope>NUCLEOTIDE SEQUENCE [LARGE SCALE GENOMIC DNA]</scope>
    <source>
        <strain evidence="6">JCM 10833 / BCRC 13528 / IAM 13628 / NBRC 14792 / USDA 110</strain>
    </source>
</reference>
<reference key="2">
    <citation type="journal article" date="2015" name="Nat. Commun.">
        <title>A novel pathway producing dimethylsulphide in bacteria is widespread in soil environments.</title>
        <authorList>
            <person name="Carrion O."/>
            <person name="Curson A.R."/>
            <person name="Kumaresan D."/>
            <person name="Fu Y."/>
            <person name="Lang A.S."/>
            <person name="Mercade E."/>
            <person name="Todd J.D."/>
        </authorList>
    </citation>
    <scope>FUNCTION</scope>
    <scope>CATALYTIC ACTIVITY</scope>
    <source>
        <strain>JCM 10833 / BCRC 13528 / IAM 13628 / NBRC 14792 / USDA 110</strain>
    </source>
</reference>
<organism>
    <name type="scientific">Bradyrhizobium diazoefficiens (strain JCM 10833 / BCRC 13528 / IAM 13628 / NBRC 14792 / USDA 110)</name>
    <dbReference type="NCBI Taxonomy" id="224911"/>
    <lineage>
        <taxon>Bacteria</taxon>
        <taxon>Pseudomonadati</taxon>
        <taxon>Pseudomonadota</taxon>
        <taxon>Alphaproteobacteria</taxon>
        <taxon>Hyphomicrobiales</taxon>
        <taxon>Nitrobacteraceae</taxon>
        <taxon>Bradyrhizobium</taxon>
    </lineage>
</organism>
<comment type="function">
    <text evidence="2">Catalyzes the methylation of methanethiol (MeSH) to yield dimethylsulphide (DMS).</text>
</comment>
<comment type="catalytic activity">
    <reaction evidence="2">
        <text>methanethiol + S-adenosyl-L-methionine = dimethyl sulfide + S-adenosyl-L-homocysteine + H(+)</text>
        <dbReference type="Rhea" id="RHEA:50428"/>
        <dbReference type="ChEBI" id="CHEBI:15378"/>
        <dbReference type="ChEBI" id="CHEBI:16007"/>
        <dbReference type="ChEBI" id="CHEBI:17437"/>
        <dbReference type="ChEBI" id="CHEBI:57856"/>
        <dbReference type="ChEBI" id="CHEBI:59789"/>
        <dbReference type="EC" id="2.1.1.334"/>
    </reaction>
</comment>
<comment type="subcellular location">
    <subcellularLocation>
        <location evidence="1">Membrane</location>
        <topology evidence="1">Multi-pass membrane protein</topology>
    </subcellularLocation>
</comment>
<comment type="similarity">
    <text evidence="4">Belongs to the nurim family.</text>
</comment>
<gene>
    <name evidence="3" type="primary">mddA2</name>
    <name evidence="5" type="ordered locus">blr5741</name>
</gene>
<proteinExistence type="evidence at protein level"/>
<name>MDDA2_BRADU</name>
<dbReference type="EC" id="2.1.1.334" evidence="2"/>
<dbReference type="EMBL" id="BA000040">
    <property type="protein sequence ID" value="BAC51006.1"/>
    <property type="molecule type" value="Genomic_DNA"/>
</dbReference>
<dbReference type="RefSeq" id="NP_772381.1">
    <property type="nucleotide sequence ID" value="NC_004463.1"/>
</dbReference>
<dbReference type="RefSeq" id="WP_011088485.1">
    <property type="nucleotide sequence ID" value="NC_004463.1"/>
</dbReference>
<dbReference type="STRING" id="224911.AAV28_26215"/>
<dbReference type="EnsemblBacteria" id="BAC51006">
    <property type="protein sequence ID" value="BAC51006"/>
    <property type="gene ID" value="BAC51006"/>
</dbReference>
<dbReference type="GeneID" id="46492742"/>
<dbReference type="KEGG" id="bja:blr5741"/>
<dbReference type="PATRIC" id="fig|224911.44.peg.5673"/>
<dbReference type="eggNOG" id="COG2020">
    <property type="taxonomic scope" value="Bacteria"/>
</dbReference>
<dbReference type="HOGENOM" id="CLU_084189_0_0_5"/>
<dbReference type="InParanoid" id="Q89I98"/>
<dbReference type="OrthoDB" id="9789029at2"/>
<dbReference type="PhylomeDB" id="Q89I98"/>
<dbReference type="Proteomes" id="UP000002526">
    <property type="component" value="Chromosome"/>
</dbReference>
<dbReference type="GO" id="GO:0016020">
    <property type="term" value="C:membrane"/>
    <property type="evidence" value="ECO:0007669"/>
    <property type="project" value="UniProtKB-SubCell"/>
</dbReference>
<dbReference type="GO" id="GO:0008168">
    <property type="term" value="F:methyltransferase activity"/>
    <property type="evidence" value="ECO:0007669"/>
    <property type="project" value="UniProtKB-KW"/>
</dbReference>
<dbReference type="GO" id="GO:0032259">
    <property type="term" value="P:methylation"/>
    <property type="evidence" value="ECO:0007669"/>
    <property type="project" value="UniProtKB-KW"/>
</dbReference>
<dbReference type="Gene3D" id="1.20.120.1630">
    <property type="match status" value="1"/>
</dbReference>
<dbReference type="InterPro" id="IPR054700">
    <property type="entry name" value="MddA"/>
</dbReference>
<dbReference type="InterPro" id="IPR009915">
    <property type="entry name" value="NnrU_dom"/>
</dbReference>
<dbReference type="InterPro" id="IPR033580">
    <property type="entry name" value="Nurim-like"/>
</dbReference>
<dbReference type="NCBIfam" id="NF045656">
    <property type="entry name" value="MeththiolMtaseMddA"/>
    <property type="match status" value="1"/>
</dbReference>
<dbReference type="PANTHER" id="PTHR31040">
    <property type="entry name" value="NURIM"/>
    <property type="match status" value="1"/>
</dbReference>
<dbReference type="PANTHER" id="PTHR31040:SF1">
    <property type="entry name" value="NURIM"/>
    <property type="match status" value="1"/>
</dbReference>
<dbReference type="Pfam" id="PF07298">
    <property type="entry name" value="NnrU"/>
    <property type="match status" value="1"/>
</dbReference>
<keyword id="KW-0472">Membrane</keyword>
<keyword id="KW-0489">Methyltransferase</keyword>
<keyword id="KW-1185">Reference proteome</keyword>
<keyword id="KW-0949">S-adenosyl-L-methionine</keyword>
<keyword id="KW-0808">Transferase</keyword>
<keyword id="KW-0812">Transmembrane</keyword>
<keyword id="KW-1133">Transmembrane helix</keyword>
<feature type="chain" id="PRO_0000444501" description="Methanethiol S-methyltransferase 2">
    <location>
        <begin position="1"/>
        <end position="259"/>
    </location>
</feature>
<feature type="transmembrane region" description="Helical" evidence="1">
    <location>
        <begin position="5"/>
        <end position="25"/>
    </location>
</feature>
<feature type="transmembrane region" description="Helical" evidence="1">
    <location>
        <begin position="46"/>
        <end position="66"/>
    </location>
</feature>
<feature type="transmembrane region" description="Helical" evidence="1">
    <location>
        <begin position="88"/>
        <end position="108"/>
    </location>
</feature>
<feature type="transmembrane region" description="Helical" evidence="1">
    <location>
        <begin position="115"/>
        <end position="135"/>
    </location>
</feature>
<feature type="transmembrane region" description="Helical" evidence="1">
    <location>
        <begin position="182"/>
        <end position="202"/>
    </location>
</feature>
<evidence type="ECO:0000255" key="1"/>
<evidence type="ECO:0000269" key="2">
    <source>
    </source>
</evidence>
<evidence type="ECO:0000303" key="3">
    <source>
    </source>
</evidence>
<evidence type="ECO:0000305" key="4"/>
<evidence type="ECO:0000312" key="5">
    <source>
        <dbReference type="EMBL" id="BAC51006.1"/>
    </source>
</evidence>
<evidence type="ECO:0000312" key="6">
    <source>
        <dbReference type="Proteomes" id="UP000002526"/>
    </source>
</evidence>
<sequence length="259" mass="29478">MFARLAILLYAIVSYAAFTVSFLYALGFVGNYVVPKSIDVGSPTNLGEAILVNLLLMSLFAIQHSVMARPAFKRWWAKFLPLACQRSTYVLLSSLILLLLFWQWRPIPTPVWQTSGIAAWLLIGVHWLGWLIAFASTHMIDHFDLFGLRQAFVAFRGTEISGQSFRTPLLYKIVRHPLMLGFLLAFWATPAMTAGHLLFALANTAYILVALQFEERDLIAEFGATYQDYRRRVPMLVPRLFARRRTDDRKSPRPVGAPR</sequence>
<protein>
    <recommendedName>
        <fullName evidence="3">Methanethiol S-methyltransferase 2</fullName>
        <ecNumber evidence="2">2.1.1.334</ecNumber>
    </recommendedName>
</protein>